<accession>Q129W6</accession>
<sequence length="507" mass="53760">MSGTLARSVMVLGTTSGAGKSWLTTALCRYYARQGLKVAPFKAQNMSNNARVVAGGEIGSAQYFQALAARAEPDVRMNPLLLKPEKDTQSQVILMGQVDAELSRMPWRGRSASVWPVIARALDELLAENDVVVIEGAGSPAEINLKSSDIVNMRVAQHTGASCLLVTDIDRGGAFAHLYGTWAMLDEAERQLIKGFVLNKFRGDASLLAPGPQMLQEMTGVPTVATLPMWWQHGLPEEDGVFDMAPTLGTGVSTLPPEGAELARGGPSLRSPRPVIAVIAYPRISNLDEFQPLKNVPGVHLKWVRSPGELAGVDWIILPGSKHTSGDLAWLRAQGLDRAVAAHAEQGGAVLGVCGGLQMLGEALIDPHGIDGNAPGLGLLPVVTVFEEGKTVQRRQARFGELAGAWAALSGVGLQGYEIHHGQTAPHTAMAAAGDIAHGVMAEGLAWQNTRGNVLGLYLHGMFEDPAVLQALFGATVPTLDAVFDGLADYIEQHFEPGVLQSLIATP</sequence>
<gene>
    <name evidence="1" type="primary">cobQ</name>
    <name type="ordered locus">Bpro_2760</name>
</gene>
<dbReference type="EMBL" id="CP000316">
    <property type="protein sequence ID" value="ABE44676.1"/>
    <property type="molecule type" value="Genomic_DNA"/>
</dbReference>
<dbReference type="SMR" id="Q129W6"/>
<dbReference type="STRING" id="296591.Bpro_2760"/>
<dbReference type="KEGG" id="pol:Bpro_2760"/>
<dbReference type="eggNOG" id="COG1492">
    <property type="taxonomic scope" value="Bacteria"/>
</dbReference>
<dbReference type="HOGENOM" id="CLU_019250_2_1_4"/>
<dbReference type="OrthoDB" id="9808302at2"/>
<dbReference type="UniPathway" id="UPA00148"/>
<dbReference type="Proteomes" id="UP000001983">
    <property type="component" value="Chromosome"/>
</dbReference>
<dbReference type="GO" id="GO:0015420">
    <property type="term" value="F:ABC-type vitamin B12 transporter activity"/>
    <property type="evidence" value="ECO:0007669"/>
    <property type="project" value="UniProtKB-UniRule"/>
</dbReference>
<dbReference type="GO" id="GO:0003824">
    <property type="term" value="F:catalytic activity"/>
    <property type="evidence" value="ECO:0007669"/>
    <property type="project" value="InterPro"/>
</dbReference>
<dbReference type="GO" id="GO:0009236">
    <property type="term" value="P:cobalamin biosynthetic process"/>
    <property type="evidence" value="ECO:0007669"/>
    <property type="project" value="UniProtKB-UniRule"/>
</dbReference>
<dbReference type="CDD" id="cd05389">
    <property type="entry name" value="CobQ_N"/>
    <property type="match status" value="1"/>
</dbReference>
<dbReference type="CDD" id="cd01750">
    <property type="entry name" value="GATase1_CobQ"/>
    <property type="match status" value="1"/>
</dbReference>
<dbReference type="Gene3D" id="3.40.50.880">
    <property type="match status" value="1"/>
</dbReference>
<dbReference type="Gene3D" id="3.40.50.300">
    <property type="entry name" value="P-loop containing nucleotide triphosphate hydrolases"/>
    <property type="match status" value="1"/>
</dbReference>
<dbReference type="HAMAP" id="MF_00028">
    <property type="entry name" value="CobQ"/>
    <property type="match status" value="1"/>
</dbReference>
<dbReference type="InterPro" id="IPR029062">
    <property type="entry name" value="Class_I_gatase-like"/>
</dbReference>
<dbReference type="InterPro" id="IPR002586">
    <property type="entry name" value="CobQ/CobB/MinD/ParA_Nub-bd_dom"/>
</dbReference>
<dbReference type="InterPro" id="IPR033949">
    <property type="entry name" value="CobQ_GATase1"/>
</dbReference>
<dbReference type="InterPro" id="IPR047045">
    <property type="entry name" value="CobQ_N"/>
</dbReference>
<dbReference type="InterPro" id="IPR004459">
    <property type="entry name" value="CobQ_synth"/>
</dbReference>
<dbReference type="InterPro" id="IPR011698">
    <property type="entry name" value="GATase_3"/>
</dbReference>
<dbReference type="InterPro" id="IPR027417">
    <property type="entry name" value="P-loop_NTPase"/>
</dbReference>
<dbReference type="NCBIfam" id="NF001989">
    <property type="entry name" value="PRK00784.1"/>
    <property type="match status" value="1"/>
</dbReference>
<dbReference type="PANTHER" id="PTHR21343:SF1">
    <property type="entry name" value="COBYRIC ACID SYNTHASE"/>
    <property type="match status" value="1"/>
</dbReference>
<dbReference type="PANTHER" id="PTHR21343">
    <property type="entry name" value="DETHIOBIOTIN SYNTHETASE"/>
    <property type="match status" value="1"/>
</dbReference>
<dbReference type="Pfam" id="PF01656">
    <property type="entry name" value="CbiA"/>
    <property type="match status" value="1"/>
</dbReference>
<dbReference type="Pfam" id="PF07685">
    <property type="entry name" value="GATase_3"/>
    <property type="match status" value="1"/>
</dbReference>
<dbReference type="SUPFAM" id="SSF52317">
    <property type="entry name" value="Class I glutamine amidotransferase-like"/>
    <property type="match status" value="1"/>
</dbReference>
<dbReference type="SUPFAM" id="SSF52540">
    <property type="entry name" value="P-loop containing nucleoside triphosphate hydrolases"/>
    <property type="match status" value="1"/>
</dbReference>
<dbReference type="PROSITE" id="PS51274">
    <property type="entry name" value="GATASE_COBBQ"/>
    <property type="match status" value="1"/>
</dbReference>
<feature type="chain" id="PRO_0000332360" description="Cobyric acid synthase">
    <location>
        <begin position="1"/>
        <end position="507"/>
    </location>
</feature>
<feature type="domain" description="GATase cobBQ-type" evidence="1">
    <location>
        <begin position="273"/>
        <end position="468"/>
    </location>
</feature>
<feature type="active site" description="Nucleophile" evidence="1">
    <location>
        <position position="354"/>
    </location>
</feature>
<feature type="active site" evidence="1">
    <location>
        <position position="460"/>
    </location>
</feature>
<reference key="1">
    <citation type="journal article" date="2008" name="Appl. Environ. Microbiol.">
        <title>The genome of Polaromonas sp. strain JS666: insights into the evolution of a hydrocarbon- and xenobiotic-degrading bacterium, and features of relevance to biotechnology.</title>
        <authorList>
            <person name="Mattes T.E."/>
            <person name="Alexander A.K."/>
            <person name="Richardson P.M."/>
            <person name="Munk A.C."/>
            <person name="Han C.S."/>
            <person name="Stothard P."/>
            <person name="Coleman N.V."/>
        </authorList>
    </citation>
    <scope>NUCLEOTIDE SEQUENCE [LARGE SCALE GENOMIC DNA]</scope>
    <source>
        <strain>JS666 / ATCC BAA-500</strain>
    </source>
</reference>
<evidence type="ECO:0000255" key="1">
    <source>
        <dbReference type="HAMAP-Rule" id="MF_00028"/>
    </source>
</evidence>
<proteinExistence type="inferred from homology"/>
<keyword id="KW-0169">Cobalamin biosynthesis</keyword>
<keyword id="KW-0315">Glutamine amidotransferase</keyword>
<keyword id="KW-1185">Reference proteome</keyword>
<organism>
    <name type="scientific">Polaromonas sp. (strain JS666 / ATCC BAA-500)</name>
    <dbReference type="NCBI Taxonomy" id="296591"/>
    <lineage>
        <taxon>Bacteria</taxon>
        <taxon>Pseudomonadati</taxon>
        <taxon>Pseudomonadota</taxon>
        <taxon>Betaproteobacteria</taxon>
        <taxon>Burkholderiales</taxon>
        <taxon>Comamonadaceae</taxon>
        <taxon>Polaromonas</taxon>
    </lineage>
</organism>
<name>COBQ_POLSJ</name>
<comment type="function">
    <text evidence="1">Catalyzes amidations at positions B, D, E, and G on adenosylcobyrinic A,C-diamide. NH(2) groups are provided by glutamine, and one molecule of ATP is hydrogenolyzed for each amidation.</text>
</comment>
<comment type="pathway">
    <text evidence="1">Cofactor biosynthesis; adenosylcobalamin biosynthesis.</text>
</comment>
<comment type="similarity">
    <text evidence="1">Belongs to the CobB/CobQ family. CobQ subfamily.</text>
</comment>
<protein>
    <recommendedName>
        <fullName evidence="1">Cobyric acid synthase</fullName>
    </recommendedName>
</protein>